<reference key="1">
    <citation type="journal article" date="2009" name="PLoS Pathog.">
        <title>Molecular evolutionary consequences of niche restriction in Francisella tularensis, a facultative intracellular pathogen.</title>
        <authorList>
            <person name="Larsson P."/>
            <person name="Elfsmark D."/>
            <person name="Svensson K."/>
            <person name="Wikstroem P."/>
            <person name="Forsman M."/>
            <person name="Brettin T."/>
            <person name="Keim P."/>
            <person name="Johansson A."/>
        </authorList>
    </citation>
    <scope>NUCLEOTIDE SEQUENCE [LARGE SCALE GENOMIC DNA]</scope>
    <source>
        <strain>FSC147</strain>
    </source>
</reference>
<gene>
    <name evidence="1" type="primary">ubiA</name>
    <name type="ordered locus">FTM_0448</name>
</gene>
<comment type="function">
    <text evidence="1">Catalyzes the prenylation of para-hydroxybenzoate (PHB) with an all-trans polyprenyl group. Mediates the second step in the final reaction sequence of ubiquinone-8 (UQ-8) biosynthesis, which is the condensation of the polyisoprenoid side chain with PHB, generating the first membrane-bound Q intermediate 3-octaprenyl-4-hydroxybenzoate.</text>
</comment>
<comment type="catalytic activity">
    <reaction evidence="1">
        <text>all-trans-octaprenyl diphosphate + 4-hydroxybenzoate = 4-hydroxy-3-(all-trans-octaprenyl)benzoate + diphosphate</text>
        <dbReference type="Rhea" id="RHEA:27782"/>
        <dbReference type="ChEBI" id="CHEBI:1617"/>
        <dbReference type="ChEBI" id="CHEBI:17879"/>
        <dbReference type="ChEBI" id="CHEBI:33019"/>
        <dbReference type="ChEBI" id="CHEBI:57711"/>
        <dbReference type="EC" id="2.5.1.39"/>
    </reaction>
</comment>
<comment type="cofactor">
    <cofactor evidence="1">
        <name>Mg(2+)</name>
        <dbReference type="ChEBI" id="CHEBI:18420"/>
    </cofactor>
</comment>
<comment type="pathway">
    <text evidence="1">Cofactor biosynthesis; ubiquinone biosynthesis.</text>
</comment>
<comment type="subcellular location">
    <subcellularLocation>
        <location evidence="1">Cell inner membrane</location>
        <topology evidence="1">Multi-pass membrane protein</topology>
    </subcellularLocation>
</comment>
<comment type="similarity">
    <text evidence="1">Belongs to the UbiA prenyltransferase family.</text>
</comment>
<sequence>MNKQQLKAYFMLMRLHRPIPILLILWPTLTALVLASHGLPDISYLVIFTIGVVVMRTVGCIINDIADVDFDKHVARTNTRPLTSGQLSIKNAIWLCISLTLVAFICVLFLNLYTILLSFVALFLAILYPFCKRFFAIPQLILGLAFNFGIFMAFSAIQNQIPVEAWIFYIATICWTIAYDTIYALADREFDLEIGIKSSAVLFGNKVFRYILLFNFLSLLLLIILGIYCDFNSFFYLGVVICSLFFVRNYFLYKKLGITNCINAFSANHWIGLIIFIIAVIQYI</sequence>
<protein>
    <recommendedName>
        <fullName evidence="1">4-hydroxybenzoate octaprenyltransferase</fullName>
        <ecNumber evidence="1">2.5.1.39</ecNumber>
    </recommendedName>
    <alternativeName>
        <fullName evidence="1">4-HB polyprenyltransferase</fullName>
    </alternativeName>
</protein>
<dbReference type="EC" id="2.5.1.39" evidence="1"/>
<dbReference type="EMBL" id="CP000915">
    <property type="protein sequence ID" value="ACD30473.1"/>
    <property type="molecule type" value="Genomic_DNA"/>
</dbReference>
<dbReference type="SMR" id="B2SF41"/>
<dbReference type="KEGG" id="ftm:FTM_0448"/>
<dbReference type="HOGENOM" id="CLU_034879_1_0_6"/>
<dbReference type="UniPathway" id="UPA00232"/>
<dbReference type="GO" id="GO:0005886">
    <property type="term" value="C:plasma membrane"/>
    <property type="evidence" value="ECO:0007669"/>
    <property type="project" value="UniProtKB-SubCell"/>
</dbReference>
<dbReference type="GO" id="GO:0008412">
    <property type="term" value="F:4-hydroxybenzoate polyprenyltransferase activity"/>
    <property type="evidence" value="ECO:0007669"/>
    <property type="project" value="UniProtKB-UniRule"/>
</dbReference>
<dbReference type="GO" id="GO:0006744">
    <property type="term" value="P:ubiquinone biosynthetic process"/>
    <property type="evidence" value="ECO:0007669"/>
    <property type="project" value="UniProtKB-UniRule"/>
</dbReference>
<dbReference type="CDD" id="cd13959">
    <property type="entry name" value="PT_UbiA_COQ2"/>
    <property type="match status" value="1"/>
</dbReference>
<dbReference type="FunFam" id="1.10.357.140:FF:000008">
    <property type="entry name" value="4-hydroxybenzoate octaprenyltransferase"/>
    <property type="match status" value="1"/>
</dbReference>
<dbReference type="FunFam" id="1.20.120.1780:FF:000001">
    <property type="entry name" value="4-hydroxybenzoate octaprenyltransferase"/>
    <property type="match status" value="1"/>
</dbReference>
<dbReference type="Gene3D" id="1.10.357.140">
    <property type="entry name" value="UbiA prenyltransferase"/>
    <property type="match status" value="1"/>
</dbReference>
<dbReference type="Gene3D" id="1.20.120.1780">
    <property type="entry name" value="UbiA prenyltransferase"/>
    <property type="match status" value="1"/>
</dbReference>
<dbReference type="HAMAP" id="MF_01635">
    <property type="entry name" value="UbiA"/>
    <property type="match status" value="1"/>
</dbReference>
<dbReference type="InterPro" id="IPR006370">
    <property type="entry name" value="HB_polyprenyltransferase-like"/>
</dbReference>
<dbReference type="InterPro" id="IPR039653">
    <property type="entry name" value="Prenyltransferase"/>
</dbReference>
<dbReference type="InterPro" id="IPR000537">
    <property type="entry name" value="UbiA_prenyltransferase"/>
</dbReference>
<dbReference type="InterPro" id="IPR030470">
    <property type="entry name" value="UbiA_prenylTrfase_CS"/>
</dbReference>
<dbReference type="InterPro" id="IPR044878">
    <property type="entry name" value="UbiA_sf"/>
</dbReference>
<dbReference type="NCBIfam" id="TIGR01474">
    <property type="entry name" value="ubiA_proteo"/>
    <property type="match status" value="1"/>
</dbReference>
<dbReference type="PANTHER" id="PTHR11048:SF28">
    <property type="entry name" value="4-HYDROXYBENZOATE POLYPRENYLTRANSFERASE, MITOCHONDRIAL"/>
    <property type="match status" value="1"/>
</dbReference>
<dbReference type="PANTHER" id="PTHR11048">
    <property type="entry name" value="PRENYLTRANSFERASES"/>
    <property type="match status" value="1"/>
</dbReference>
<dbReference type="Pfam" id="PF01040">
    <property type="entry name" value="UbiA"/>
    <property type="match status" value="1"/>
</dbReference>
<dbReference type="PROSITE" id="PS00943">
    <property type="entry name" value="UBIA"/>
    <property type="match status" value="1"/>
</dbReference>
<organism>
    <name type="scientific">Francisella tularensis subsp. mediasiatica (strain FSC147)</name>
    <dbReference type="NCBI Taxonomy" id="441952"/>
    <lineage>
        <taxon>Bacteria</taxon>
        <taxon>Pseudomonadati</taxon>
        <taxon>Pseudomonadota</taxon>
        <taxon>Gammaproteobacteria</taxon>
        <taxon>Thiotrichales</taxon>
        <taxon>Francisellaceae</taxon>
        <taxon>Francisella</taxon>
    </lineage>
</organism>
<feature type="chain" id="PRO_1000186675" description="4-hydroxybenzoate octaprenyltransferase">
    <location>
        <begin position="1"/>
        <end position="284"/>
    </location>
</feature>
<feature type="transmembrane region" description="Helical" evidence="1">
    <location>
        <begin position="19"/>
        <end position="39"/>
    </location>
</feature>
<feature type="transmembrane region" description="Helical" evidence="1">
    <location>
        <begin position="42"/>
        <end position="62"/>
    </location>
</feature>
<feature type="transmembrane region" description="Helical" evidence="1">
    <location>
        <begin position="85"/>
        <end position="105"/>
    </location>
</feature>
<feature type="transmembrane region" description="Helical" evidence="1">
    <location>
        <begin position="107"/>
        <end position="127"/>
    </location>
</feature>
<feature type="transmembrane region" description="Helical" evidence="1">
    <location>
        <begin position="134"/>
        <end position="154"/>
    </location>
</feature>
<feature type="transmembrane region" description="Helical" evidence="1">
    <location>
        <begin position="165"/>
        <end position="185"/>
    </location>
</feature>
<feature type="transmembrane region" description="Helical" evidence="1">
    <location>
        <begin position="211"/>
        <end position="231"/>
    </location>
</feature>
<feature type="transmembrane region" description="Helical" evidence="1">
    <location>
        <begin position="233"/>
        <end position="253"/>
    </location>
</feature>
<feature type="transmembrane region" description="Helical" evidence="1">
    <location>
        <begin position="261"/>
        <end position="281"/>
    </location>
</feature>
<accession>B2SF41</accession>
<proteinExistence type="inferred from homology"/>
<keyword id="KW-0997">Cell inner membrane</keyword>
<keyword id="KW-1003">Cell membrane</keyword>
<keyword id="KW-0460">Magnesium</keyword>
<keyword id="KW-0472">Membrane</keyword>
<keyword id="KW-0808">Transferase</keyword>
<keyword id="KW-0812">Transmembrane</keyword>
<keyword id="KW-1133">Transmembrane helix</keyword>
<keyword id="KW-0831">Ubiquinone biosynthesis</keyword>
<name>UBIA_FRATM</name>
<evidence type="ECO:0000255" key="1">
    <source>
        <dbReference type="HAMAP-Rule" id="MF_01635"/>
    </source>
</evidence>